<comment type="function">
    <text evidence="1">DNA-dependent RNA polymerase (RNAP) catalyzes the transcription of DNA into RNA using the four ribonucleoside triphosphates as substrates.</text>
</comment>
<comment type="catalytic activity">
    <reaction evidence="1">
        <text>RNA(n) + a ribonucleoside 5'-triphosphate = RNA(n+1) + diphosphate</text>
        <dbReference type="Rhea" id="RHEA:21248"/>
        <dbReference type="Rhea" id="RHEA-COMP:14527"/>
        <dbReference type="Rhea" id="RHEA-COMP:17342"/>
        <dbReference type="ChEBI" id="CHEBI:33019"/>
        <dbReference type="ChEBI" id="CHEBI:61557"/>
        <dbReference type="ChEBI" id="CHEBI:140395"/>
        <dbReference type="EC" id="2.7.7.6"/>
    </reaction>
</comment>
<comment type="subunit">
    <text evidence="1">Part of the RNA polymerase complex.</text>
</comment>
<comment type="subcellular location">
    <subcellularLocation>
        <location evidence="1">Cytoplasm</location>
    </subcellularLocation>
</comment>
<comment type="similarity">
    <text evidence="1">Belongs to the archaeal Rpo11/eukaryotic RPB11/RPC19 RNA polymerase subunit family.</text>
</comment>
<protein>
    <recommendedName>
        <fullName evidence="1">DNA-directed RNA polymerase subunit Rpo11</fullName>
        <ecNumber evidence="1">2.7.7.6</ecNumber>
    </recommendedName>
    <alternativeName>
        <fullName evidence="1">DNA-directed RNA polymerase subunit L</fullName>
    </alternativeName>
</protein>
<organism>
    <name type="scientific">Pyrococcus horikoshii (strain ATCC 700860 / DSM 12428 / JCM 9974 / NBRC 100139 / OT-3)</name>
    <dbReference type="NCBI Taxonomy" id="70601"/>
    <lineage>
        <taxon>Archaea</taxon>
        <taxon>Methanobacteriati</taxon>
        <taxon>Methanobacteriota</taxon>
        <taxon>Thermococci</taxon>
        <taxon>Thermococcales</taxon>
        <taxon>Thermococcaceae</taxon>
        <taxon>Pyrococcus</taxon>
    </lineage>
</organism>
<keyword id="KW-0963">Cytoplasm</keyword>
<keyword id="KW-0240">DNA-directed RNA polymerase</keyword>
<keyword id="KW-0548">Nucleotidyltransferase</keyword>
<keyword id="KW-0804">Transcription</keyword>
<keyword id="KW-0808">Transferase</keyword>
<evidence type="ECO:0000255" key="1">
    <source>
        <dbReference type="HAMAP-Rule" id="MF_00261"/>
    </source>
</evidence>
<dbReference type="EC" id="2.7.7.6" evidence="1"/>
<dbReference type="EMBL" id="BA000001">
    <property type="status" value="NOT_ANNOTATED_CDS"/>
    <property type="molecule type" value="Genomic_DNA"/>
</dbReference>
<dbReference type="RefSeq" id="WP_010884158.1">
    <property type="nucleotide sequence ID" value="NC_000961.1"/>
</dbReference>
<dbReference type="SMR" id="P57671"/>
<dbReference type="GeneID" id="1443940"/>
<dbReference type="OrthoDB" id="24205at2157"/>
<dbReference type="Proteomes" id="UP000000752">
    <property type="component" value="Chromosome"/>
</dbReference>
<dbReference type="GO" id="GO:0005737">
    <property type="term" value="C:cytoplasm"/>
    <property type="evidence" value="ECO:0007669"/>
    <property type="project" value="UniProtKB-SubCell"/>
</dbReference>
<dbReference type="GO" id="GO:0000428">
    <property type="term" value="C:DNA-directed RNA polymerase complex"/>
    <property type="evidence" value="ECO:0007669"/>
    <property type="project" value="UniProtKB-KW"/>
</dbReference>
<dbReference type="GO" id="GO:0003677">
    <property type="term" value="F:DNA binding"/>
    <property type="evidence" value="ECO:0007669"/>
    <property type="project" value="InterPro"/>
</dbReference>
<dbReference type="GO" id="GO:0003899">
    <property type="term" value="F:DNA-directed RNA polymerase activity"/>
    <property type="evidence" value="ECO:0007669"/>
    <property type="project" value="UniProtKB-UniRule"/>
</dbReference>
<dbReference type="GO" id="GO:0046983">
    <property type="term" value="F:protein dimerization activity"/>
    <property type="evidence" value="ECO:0007669"/>
    <property type="project" value="InterPro"/>
</dbReference>
<dbReference type="GO" id="GO:0006351">
    <property type="term" value="P:DNA-templated transcription"/>
    <property type="evidence" value="ECO:0007669"/>
    <property type="project" value="UniProtKB-UniRule"/>
</dbReference>
<dbReference type="CDD" id="cd06927">
    <property type="entry name" value="RNAP_L"/>
    <property type="match status" value="1"/>
</dbReference>
<dbReference type="Gene3D" id="3.30.1360.10">
    <property type="entry name" value="RNA polymerase, RBP11-like subunit"/>
    <property type="match status" value="1"/>
</dbReference>
<dbReference type="HAMAP" id="MF_00261">
    <property type="entry name" value="RNApol_arch_Rpo11"/>
    <property type="match status" value="1"/>
</dbReference>
<dbReference type="InterPro" id="IPR036603">
    <property type="entry name" value="RBP11-like"/>
</dbReference>
<dbReference type="InterPro" id="IPR009025">
    <property type="entry name" value="RBP11-like_dimer"/>
</dbReference>
<dbReference type="InterPro" id="IPR008193">
    <property type="entry name" value="RNA_pol_Rpb11_13-16kDa_CS"/>
</dbReference>
<dbReference type="InterPro" id="IPR022905">
    <property type="entry name" value="Rpo11-like"/>
</dbReference>
<dbReference type="NCBIfam" id="NF002235">
    <property type="entry name" value="PRK01146.1-3"/>
    <property type="match status" value="1"/>
</dbReference>
<dbReference type="PANTHER" id="PTHR13946">
    <property type="entry name" value="DNA-DIRECTED RNA POLYMERASE I,II,III"/>
    <property type="match status" value="1"/>
</dbReference>
<dbReference type="PANTHER" id="PTHR13946:SF28">
    <property type="entry name" value="DNA-DIRECTED RNA POLYMERASES I AND III SUBUNIT RPAC2"/>
    <property type="match status" value="1"/>
</dbReference>
<dbReference type="Pfam" id="PF13656">
    <property type="entry name" value="RNA_pol_L_2"/>
    <property type="match status" value="1"/>
</dbReference>
<dbReference type="SUPFAM" id="SSF55257">
    <property type="entry name" value="RBP11-like subunits of RNA polymerase"/>
    <property type="match status" value="1"/>
</dbReference>
<dbReference type="PROSITE" id="PS01154">
    <property type="entry name" value="RNA_POL_L_13KD"/>
    <property type="match status" value="1"/>
</dbReference>
<feature type="chain" id="PRO_0000149336" description="DNA-directed RNA polymerase subunit Rpo11">
    <location>
        <begin position="1"/>
        <end position="95"/>
    </location>
</feature>
<accession>P57671</accession>
<sequence length="95" mass="11144">MKIEVIKKEEDMLEFYLEGEDHTFANLLTEVLREDPHVKFVAYTIEHPITMARKPRFRVVTDGKVTPEKALEEAARKIFNRAKEVLDAWEKVVKS</sequence>
<proteinExistence type="inferred from homology"/>
<gene>
    <name evidence="1" type="primary">rpo11</name>
    <name evidence="1" type="synonym">rpoL</name>
    <name type="ordered locus">PH0041.1</name>
</gene>
<reference key="1">
    <citation type="journal article" date="1998" name="DNA Res.">
        <title>Complete sequence and gene organization of the genome of a hyper-thermophilic archaebacterium, Pyrococcus horikoshii OT3.</title>
        <authorList>
            <person name="Kawarabayasi Y."/>
            <person name="Sawada M."/>
            <person name="Horikawa H."/>
            <person name="Haikawa Y."/>
            <person name="Hino Y."/>
            <person name="Yamamoto S."/>
            <person name="Sekine M."/>
            <person name="Baba S."/>
            <person name="Kosugi H."/>
            <person name="Hosoyama A."/>
            <person name="Nagai Y."/>
            <person name="Sakai M."/>
            <person name="Ogura K."/>
            <person name="Otsuka R."/>
            <person name="Nakazawa H."/>
            <person name="Takamiya M."/>
            <person name="Ohfuku Y."/>
            <person name="Funahashi T."/>
            <person name="Tanaka T."/>
            <person name="Kudoh Y."/>
            <person name="Yamazaki J."/>
            <person name="Kushida N."/>
            <person name="Oguchi A."/>
            <person name="Aoki K."/>
            <person name="Yoshizawa T."/>
            <person name="Nakamura Y."/>
            <person name="Robb F.T."/>
            <person name="Horikoshi K."/>
            <person name="Masuchi Y."/>
            <person name="Shizuya H."/>
            <person name="Kikuchi H."/>
        </authorList>
    </citation>
    <scope>NUCLEOTIDE SEQUENCE [LARGE SCALE GENOMIC DNA]</scope>
    <source>
        <strain>ATCC 700860 / DSM 12428 / JCM 9974 / NBRC 100139 / OT-3</strain>
    </source>
</reference>
<name>RPO11_PYRHO</name>